<protein>
    <recommendedName>
        <fullName evidence="1">Uncharacterized Nudix hydrolase NudL</fullName>
        <ecNumber evidence="1">3.6.1.-</ecNumber>
    </recommendedName>
</protein>
<proteinExistence type="inferred from homology"/>
<accession>Q7N3M0</accession>
<evidence type="ECO:0000255" key="1">
    <source>
        <dbReference type="HAMAP-Rule" id="MF_01592"/>
    </source>
</evidence>
<feature type="chain" id="PRO_0000315580" description="Uncharacterized Nudix hydrolase NudL">
    <location>
        <begin position="1"/>
        <end position="187"/>
    </location>
</feature>
<feature type="domain" description="Nudix hydrolase" evidence="1">
    <location>
        <begin position="26"/>
        <end position="157"/>
    </location>
</feature>
<feature type="short sequence motif" description="Nudix box">
    <location>
        <begin position="64"/>
        <end position="86"/>
    </location>
</feature>
<feature type="binding site" evidence="1">
    <location>
        <position position="80"/>
    </location>
    <ligand>
        <name>Mg(2+)</name>
        <dbReference type="ChEBI" id="CHEBI:18420"/>
    </ligand>
</feature>
<feature type="binding site" evidence="1">
    <location>
        <position position="84"/>
    </location>
    <ligand>
        <name>Mg(2+)</name>
        <dbReference type="ChEBI" id="CHEBI:18420"/>
    </ligand>
</feature>
<dbReference type="EC" id="3.6.1.-" evidence="1"/>
<dbReference type="EMBL" id="BX571868">
    <property type="protein sequence ID" value="CAE15069.1"/>
    <property type="molecule type" value="Genomic_DNA"/>
</dbReference>
<dbReference type="RefSeq" id="WP_011146917.1">
    <property type="nucleotide sequence ID" value="NC_005126.1"/>
</dbReference>
<dbReference type="SMR" id="Q7N3M0"/>
<dbReference type="STRING" id="243265.plu2695"/>
<dbReference type="GeneID" id="48848958"/>
<dbReference type="KEGG" id="plu:plu2695"/>
<dbReference type="eggNOG" id="COG0494">
    <property type="taxonomic scope" value="Bacteria"/>
</dbReference>
<dbReference type="HOGENOM" id="CLU_040940_5_2_6"/>
<dbReference type="OrthoDB" id="9802805at2"/>
<dbReference type="Proteomes" id="UP000002514">
    <property type="component" value="Chromosome"/>
</dbReference>
<dbReference type="GO" id="GO:0010945">
    <property type="term" value="F:coenzyme A diphosphatase activity"/>
    <property type="evidence" value="ECO:0007669"/>
    <property type="project" value="InterPro"/>
</dbReference>
<dbReference type="GO" id="GO:0000287">
    <property type="term" value="F:magnesium ion binding"/>
    <property type="evidence" value="ECO:0007669"/>
    <property type="project" value="UniProtKB-UniRule"/>
</dbReference>
<dbReference type="GO" id="GO:0030145">
    <property type="term" value="F:manganese ion binding"/>
    <property type="evidence" value="ECO:0007669"/>
    <property type="project" value="UniProtKB-UniRule"/>
</dbReference>
<dbReference type="GO" id="GO:0009132">
    <property type="term" value="P:nucleoside diphosphate metabolic process"/>
    <property type="evidence" value="ECO:0007669"/>
    <property type="project" value="InterPro"/>
</dbReference>
<dbReference type="CDD" id="cd03426">
    <property type="entry name" value="NUDIX_CoAse_Nudt7"/>
    <property type="match status" value="1"/>
</dbReference>
<dbReference type="Gene3D" id="3.90.79.10">
    <property type="entry name" value="Nucleoside Triphosphate Pyrophosphohydrolase"/>
    <property type="match status" value="1"/>
</dbReference>
<dbReference type="HAMAP" id="MF_01592">
    <property type="entry name" value="Nudix_NudL"/>
    <property type="match status" value="1"/>
</dbReference>
<dbReference type="InterPro" id="IPR045121">
    <property type="entry name" value="CoAse"/>
</dbReference>
<dbReference type="InterPro" id="IPR015797">
    <property type="entry name" value="NUDIX_hydrolase-like_dom_sf"/>
</dbReference>
<dbReference type="InterPro" id="IPR000086">
    <property type="entry name" value="NUDIX_hydrolase_dom"/>
</dbReference>
<dbReference type="InterPro" id="IPR000059">
    <property type="entry name" value="NUDIX_hydrolase_NudL_CS"/>
</dbReference>
<dbReference type="InterPro" id="IPR023735">
    <property type="entry name" value="Nudix_NudL"/>
</dbReference>
<dbReference type="NCBIfam" id="NF007980">
    <property type="entry name" value="PRK10707.1"/>
    <property type="match status" value="1"/>
</dbReference>
<dbReference type="PANTHER" id="PTHR12992:SF11">
    <property type="entry name" value="MITOCHONDRIAL COENZYME A DIPHOSPHATASE NUDT8"/>
    <property type="match status" value="1"/>
</dbReference>
<dbReference type="PANTHER" id="PTHR12992">
    <property type="entry name" value="NUDIX HYDROLASE"/>
    <property type="match status" value="1"/>
</dbReference>
<dbReference type="Pfam" id="PF00293">
    <property type="entry name" value="NUDIX"/>
    <property type="match status" value="1"/>
</dbReference>
<dbReference type="SUPFAM" id="SSF55811">
    <property type="entry name" value="Nudix"/>
    <property type="match status" value="1"/>
</dbReference>
<dbReference type="PROSITE" id="PS51462">
    <property type="entry name" value="NUDIX"/>
    <property type="match status" value="1"/>
</dbReference>
<dbReference type="PROSITE" id="PS01293">
    <property type="entry name" value="NUDIX_COA"/>
    <property type="match status" value="1"/>
</dbReference>
<organism>
    <name type="scientific">Photorhabdus laumondii subsp. laumondii (strain DSM 15139 / CIP 105565 / TT01)</name>
    <name type="common">Photorhabdus luminescens subsp. laumondii</name>
    <dbReference type="NCBI Taxonomy" id="243265"/>
    <lineage>
        <taxon>Bacteria</taxon>
        <taxon>Pseudomonadati</taxon>
        <taxon>Pseudomonadota</taxon>
        <taxon>Gammaproteobacteria</taxon>
        <taxon>Enterobacterales</taxon>
        <taxon>Morganellaceae</taxon>
        <taxon>Photorhabdus</taxon>
    </lineage>
</organism>
<comment type="function">
    <text evidence="1">Probably mediates the hydrolysis of some nucleoside diphosphate derivatives.</text>
</comment>
<comment type="cofactor">
    <cofactor evidence="1">
        <name>Mn(2+)</name>
        <dbReference type="ChEBI" id="CHEBI:29035"/>
    </cofactor>
    <cofactor evidence="1">
        <name>Mg(2+)</name>
        <dbReference type="ChEBI" id="CHEBI:18420"/>
    </cofactor>
</comment>
<comment type="similarity">
    <text evidence="1">Belongs to the Nudix hydrolase family. PCD1 subfamily.</text>
</comment>
<name>NUDL_PHOLL</name>
<sequence length="187" mass="20732">MISLSDFVNRFQLQLPPPPKRLSDNNRHAAVLLPIICKPKPTLLLTRRSATLRSHAGQVAFPGGVADPKDKSIIATALREAEEEVNIPHQKVQVLGQLAPLNSSGGYLVTPIVGLLPPGLSLHSNPAEVAKIFEVPLSEALSLSSYHYLDVSRRGQQHRVYFYWYQQHLIWGLTATIIHQLAQQVQV</sequence>
<reference key="1">
    <citation type="journal article" date="2003" name="Nat. Biotechnol.">
        <title>The genome sequence of the entomopathogenic bacterium Photorhabdus luminescens.</title>
        <authorList>
            <person name="Duchaud E."/>
            <person name="Rusniok C."/>
            <person name="Frangeul L."/>
            <person name="Buchrieser C."/>
            <person name="Givaudan A."/>
            <person name="Taourit S."/>
            <person name="Bocs S."/>
            <person name="Boursaux-Eude C."/>
            <person name="Chandler M."/>
            <person name="Charles J.-F."/>
            <person name="Dassa E."/>
            <person name="Derose R."/>
            <person name="Derzelle S."/>
            <person name="Freyssinet G."/>
            <person name="Gaudriault S."/>
            <person name="Medigue C."/>
            <person name="Lanois A."/>
            <person name="Powell K."/>
            <person name="Siguier P."/>
            <person name="Vincent R."/>
            <person name="Wingate V."/>
            <person name="Zouine M."/>
            <person name="Glaser P."/>
            <person name="Boemare N."/>
            <person name="Danchin A."/>
            <person name="Kunst F."/>
        </authorList>
    </citation>
    <scope>NUCLEOTIDE SEQUENCE [LARGE SCALE GENOMIC DNA]</scope>
    <source>
        <strain>DSM 15139 / CIP 105565 / TT01</strain>
    </source>
</reference>
<gene>
    <name evidence="1" type="primary">nudL</name>
    <name type="ordered locus">plu2695</name>
</gene>
<keyword id="KW-0378">Hydrolase</keyword>
<keyword id="KW-0460">Magnesium</keyword>
<keyword id="KW-0464">Manganese</keyword>
<keyword id="KW-0479">Metal-binding</keyword>
<keyword id="KW-1185">Reference proteome</keyword>